<comment type="similarity">
    <text evidence="1">Belongs to the UPF0147 family.</text>
</comment>
<protein>
    <recommendedName>
        <fullName evidence="1">UPF0147 protein MA_0092</fullName>
    </recommendedName>
</protein>
<accession>Q8TUH5</accession>
<feature type="chain" id="PRO_0000150907" description="UPF0147 protein MA_0092">
    <location>
        <begin position="1"/>
        <end position="97"/>
    </location>
</feature>
<organism>
    <name type="scientific">Methanosarcina acetivorans (strain ATCC 35395 / DSM 2834 / JCM 12185 / C2A)</name>
    <dbReference type="NCBI Taxonomy" id="188937"/>
    <lineage>
        <taxon>Archaea</taxon>
        <taxon>Methanobacteriati</taxon>
        <taxon>Methanobacteriota</taxon>
        <taxon>Stenosarchaea group</taxon>
        <taxon>Methanomicrobia</taxon>
        <taxon>Methanosarcinales</taxon>
        <taxon>Methanosarcinaceae</taxon>
        <taxon>Methanosarcina</taxon>
    </lineage>
</organism>
<keyword id="KW-1185">Reference proteome</keyword>
<dbReference type="EMBL" id="AE010299">
    <property type="protein sequence ID" value="AAM03546.1"/>
    <property type="molecule type" value="Genomic_DNA"/>
</dbReference>
<dbReference type="SMR" id="Q8TUH5"/>
<dbReference type="FunCoup" id="Q8TUH5">
    <property type="interactions" value="1"/>
</dbReference>
<dbReference type="STRING" id="188937.MA_0092"/>
<dbReference type="EnsemblBacteria" id="AAM03546">
    <property type="protein sequence ID" value="AAM03546"/>
    <property type="gene ID" value="MA_0092"/>
</dbReference>
<dbReference type="KEGG" id="mac:MA_0092"/>
<dbReference type="HOGENOM" id="CLU_165882_1_0_2"/>
<dbReference type="InParanoid" id="Q8TUH5"/>
<dbReference type="PhylomeDB" id="Q8TUH5"/>
<dbReference type="Proteomes" id="UP000002487">
    <property type="component" value="Chromosome"/>
</dbReference>
<dbReference type="Gene3D" id="1.20.1440.50">
    <property type="entry name" value="Ta0600-like"/>
    <property type="match status" value="1"/>
</dbReference>
<dbReference type="HAMAP" id="MF_00342">
    <property type="entry name" value="UPF0147"/>
    <property type="match status" value="1"/>
</dbReference>
<dbReference type="InterPro" id="IPR023130">
    <property type="entry name" value="Ta0600-like_sf"/>
</dbReference>
<dbReference type="InterPro" id="IPR005354">
    <property type="entry name" value="UPF0147"/>
</dbReference>
<dbReference type="NCBIfam" id="NF003319">
    <property type="entry name" value="PRK04330.1"/>
    <property type="match status" value="1"/>
</dbReference>
<dbReference type="Pfam" id="PF03685">
    <property type="entry name" value="UPF0147"/>
    <property type="match status" value="1"/>
</dbReference>
<dbReference type="SUPFAM" id="SSF158436">
    <property type="entry name" value="Ta0600-like"/>
    <property type="match status" value="1"/>
</dbReference>
<gene>
    <name type="ordered locus">MA_0092</name>
</gene>
<proteinExistence type="inferred from homology"/>
<name>Y092_METAC</name>
<evidence type="ECO:0000255" key="1">
    <source>
        <dbReference type="HAMAP-Rule" id="MF_00342"/>
    </source>
</evidence>
<sequence>MTAKVIQMSSNDSAEVIRQCLQVLDSITSDSSVPRNIRRSVNEIMDILNNESEPLFLRAASSISILEDISNDPNLPLHTRTLIWNLSSQLETIPVDE</sequence>
<reference key="1">
    <citation type="journal article" date="2002" name="Genome Res.">
        <title>The genome of Methanosarcina acetivorans reveals extensive metabolic and physiological diversity.</title>
        <authorList>
            <person name="Galagan J.E."/>
            <person name="Nusbaum C."/>
            <person name="Roy A."/>
            <person name="Endrizzi M.G."/>
            <person name="Macdonald P."/>
            <person name="FitzHugh W."/>
            <person name="Calvo S."/>
            <person name="Engels R."/>
            <person name="Smirnov S."/>
            <person name="Atnoor D."/>
            <person name="Brown A."/>
            <person name="Allen N."/>
            <person name="Naylor J."/>
            <person name="Stange-Thomann N."/>
            <person name="DeArellano K."/>
            <person name="Johnson R."/>
            <person name="Linton L."/>
            <person name="McEwan P."/>
            <person name="McKernan K."/>
            <person name="Talamas J."/>
            <person name="Tirrell A."/>
            <person name="Ye W."/>
            <person name="Zimmer A."/>
            <person name="Barber R.D."/>
            <person name="Cann I."/>
            <person name="Graham D.E."/>
            <person name="Grahame D.A."/>
            <person name="Guss A.M."/>
            <person name="Hedderich R."/>
            <person name="Ingram-Smith C."/>
            <person name="Kuettner H.C."/>
            <person name="Krzycki J.A."/>
            <person name="Leigh J.A."/>
            <person name="Li W."/>
            <person name="Liu J."/>
            <person name="Mukhopadhyay B."/>
            <person name="Reeve J.N."/>
            <person name="Smith K."/>
            <person name="Springer T.A."/>
            <person name="Umayam L.A."/>
            <person name="White O."/>
            <person name="White R.H."/>
            <person name="de Macario E.C."/>
            <person name="Ferry J.G."/>
            <person name="Jarrell K.F."/>
            <person name="Jing H."/>
            <person name="Macario A.J.L."/>
            <person name="Paulsen I.T."/>
            <person name="Pritchett M."/>
            <person name="Sowers K.R."/>
            <person name="Swanson R.V."/>
            <person name="Zinder S.H."/>
            <person name="Lander E."/>
            <person name="Metcalf W.W."/>
            <person name="Birren B."/>
        </authorList>
    </citation>
    <scope>NUCLEOTIDE SEQUENCE [LARGE SCALE GENOMIC DNA]</scope>
    <source>
        <strain>ATCC 35395 / DSM 2834 / JCM 12185 / C2A</strain>
    </source>
</reference>